<gene>
    <name evidence="1" type="primary">yggU</name>
    <name type="ordered locus">ECIAI1_3086</name>
</gene>
<evidence type="ECO:0000255" key="1">
    <source>
        <dbReference type="HAMAP-Rule" id="MF_00634"/>
    </source>
</evidence>
<sequence length="96" mass="10429">MSAVTVNDDGLVLRLYIQPKASRDSIVGLHGDEVKVAITAPPVDGQANSHLVKFLGKQFRVAKSQVVIEKGELGRHKQIKIINPQQIPPEIAALIN</sequence>
<organism>
    <name type="scientific">Escherichia coli O8 (strain IAI1)</name>
    <dbReference type="NCBI Taxonomy" id="585034"/>
    <lineage>
        <taxon>Bacteria</taxon>
        <taxon>Pseudomonadati</taxon>
        <taxon>Pseudomonadota</taxon>
        <taxon>Gammaproteobacteria</taxon>
        <taxon>Enterobacterales</taxon>
        <taxon>Enterobacteriaceae</taxon>
        <taxon>Escherichia</taxon>
    </lineage>
</organism>
<reference key="1">
    <citation type="journal article" date="2009" name="PLoS Genet.">
        <title>Organised genome dynamics in the Escherichia coli species results in highly diverse adaptive paths.</title>
        <authorList>
            <person name="Touchon M."/>
            <person name="Hoede C."/>
            <person name="Tenaillon O."/>
            <person name="Barbe V."/>
            <person name="Baeriswyl S."/>
            <person name="Bidet P."/>
            <person name="Bingen E."/>
            <person name="Bonacorsi S."/>
            <person name="Bouchier C."/>
            <person name="Bouvet O."/>
            <person name="Calteau A."/>
            <person name="Chiapello H."/>
            <person name="Clermont O."/>
            <person name="Cruveiller S."/>
            <person name="Danchin A."/>
            <person name="Diard M."/>
            <person name="Dossat C."/>
            <person name="Karoui M.E."/>
            <person name="Frapy E."/>
            <person name="Garry L."/>
            <person name="Ghigo J.M."/>
            <person name="Gilles A.M."/>
            <person name="Johnson J."/>
            <person name="Le Bouguenec C."/>
            <person name="Lescat M."/>
            <person name="Mangenot S."/>
            <person name="Martinez-Jehanne V."/>
            <person name="Matic I."/>
            <person name="Nassif X."/>
            <person name="Oztas S."/>
            <person name="Petit M.A."/>
            <person name="Pichon C."/>
            <person name="Rouy Z."/>
            <person name="Ruf C.S."/>
            <person name="Schneider D."/>
            <person name="Tourret J."/>
            <person name="Vacherie B."/>
            <person name="Vallenet D."/>
            <person name="Medigue C."/>
            <person name="Rocha E.P.C."/>
            <person name="Denamur E."/>
        </authorList>
    </citation>
    <scope>NUCLEOTIDE SEQUENCE [LARGE SCALE GENOMIC DNA]</scope>
    <source>
        <strain>IAI1</strain>
    </source>
</reference>
<proteinExistence type="inferred from homology"/>
<dbReference type="EMBL" id="CU928160">
    <property type="protein sequence ID" value="CAQ99901.1"/>
    <property type="molecule type" value="Genomic_DNA"/>
</dbReference>
<dbReference type="RefSeq" id="WP_001277222.1">
    <property type="nucleotide sequence ID" value="NC_011741.1"/>
</dbReference>
<dbReference type="SMR" id="B7LYY3"/>
<dbReference type="GeneID" id="86861043"/>
<dbReference type="KEGG" id="ecr:ECIAI1_3086"/>
<dbReference type="HOGENOM" id="CLU_130694_5_0_6"/>
<dbReference type="GO" id="GO:0005737">
    <property type="term" value="C:cytoplasm"/>
    <property type="evidence" value="ECO:0007669"/>
    <property type="project" value="TreeGrafter"/>
</dbReference>
<dbReference type="Gene3D" id="3.30.1200.10">
    <property type="entry name" value="YggU-like"/>
    <property type="match status" value="1"/>
</dbReference>
<dbReference type="HAMAP" id="MF_00634">
    <property type="entry name" value="UPF0235"/>
    <property type="match status" value="1"/>
</dbReference>
<dbReference type="InterPro" id="IPR003746">
    <property type="entry name" value="DUF167"/>
</dbReference>
<dbReference type="InterPro" id="IPR036591">
    <property type="entry name" value="YggU-like_sf"/>
</dbReference>
<dbReference type="NCBIfam" id="TIGR00251">
    <property type="entry name" value="DUF167 family protein"/>
    <property type="match status" value="1"/>
</dbReference>
<dbReference type="NCBIfam" id="NF003466">
    <property type="entry name" value="PRK05090.1"/>
    <property type="match status" value="1"/>
</dbReference>
<dbReference type="PANTHER" id="PTHR13420">
    <property type="entry name" value="UPF0235 PROTEIN C15ORF40"/>
    <property type="match status" value="1"/>
</dbReference>
<dbReference type="PANTHER" id="PTHR13420:SF7">
    <property type="entry name" value="UPF0235 PROTEIN C15ORF40"/>
    <property type="match status" value="1"/>
</dbReference>
<dbReference type="Pfam" id="PF02594">
    <property type="entry name" value="DUF167"/>
    <property type="match status" value="1"/>
</dbReference>
<dbReference type="SMART" id="SM01152">
    <property type="entry name" value="DUF167"/>
    <property type="match status" value="1"/>
</dbReference>
<dbReference type="SUPFAM" id="SSF69786">
    <property type="entry name" value="YggU-like"/>
    <property type="match status" value="1"/>
</dbReference>
<protein>
    <recommendedName>
        <fullName evidence="1">UPF0235 protein YggU</fullName>
    </recommendedName>
</protein>
<accession>B7LYY3</accession>
<feature type="chain" id="PRO_1000130681" description="UPF0235 protein YggU">
    <location>
        <begin position="1"/>
        <end position="96"/>
    </location>
</feature>
<comment type="similarity">
    <text evidence="1">Belongs to the UPF0235 family.</text>
</comment>
<name>YGGU_ECO8A</name>